<accession>Q66IN2</accession>
<reference key="1">
    <citation type="submission" date="2004-08" db="EMBL/GenBank/DDBJ databases">
        <authorList>
            <consortium name="NIH - Xenopus Gene Collection (XGC) project"/>
        </authorList>
    </citation>
    <scope>NUCLEOTIDE SEQUENCE [LARGE SCALE MRNA]</scope>
    <source>
        <tissue>Kidney</tissue>
    </source>
</reference>
<evidence type="ECO:0000250" key="1">
    <source>
        <dbReference type="UniProtKB" id="Q2KHR3"/>
    </source>
</evidence>
<evidence type="ECO:0000256" key="2">
    <source>
        <dbReference type="SAM" id="MobiDB-lite"/>
    </source>
</evidence>
<evidence type="ECO:0000305" key="3"/>
<name>QSER1_XENLA</name>
<protein>
    <recommendedName>
        <fullName>Glutamine and serine-rich protein 1</fullName>
    </recommendedName>
</protein>
<organism>
    <name type="scientific">Xenopus laevis</name>
    <name type="common">African clawed frog</name>
    <dbReference type="NCBI Taxonomy" id="8355"/>
    <lineage>
        <taxon>Eukaryota</taxon>
        <taxon>Metazoa</taxon>
        <taxon>Chordata</taxon>
        <taxon>Craniata</taxon>
        <taxon>Vertebrata</taxon>
        <taxon>Euteleostomi</taxon>
        <taxon>Amphibia</taxon>
        <taxon>Batrachia</taxon>
        <taxon>Anura</taxon>
        <taxon>Pipoidea</taxon>
        <taxon>Pipidae</taxon>
        <taxon>Xenopodinae</taxon>
        <taxon>Xenopus</taxon>
        <taxon>Xenopus</taxon>
    </lineage>
</organism>
<comment type="function">
    <text evidence="1">Plays an essential role in the protection and maintenance of transcriptional and developmental programs. Protects many bivalent promoters and poised enhancers from hypermethylation, showing a marked preference for these regulatory elements over other types of promoters or enhancers. Mechanistically, cooperates with tet1 and binds to DNA in a common complex to inhibit the binding of dnmt3a/3b and therefore de novo methylation.</text>
</comment>
<comment type="subcellular location">
    <subcellularLocation>
        <location evidence="1">Chromosome</location>
    </subcellularLocation>
</comment>
<comment type="sequence caution" evidence="3">
    <conflict type="erroneous initiation">
        <sequence resource="EMBL-CDS" id="AAH81280"/>
    </conflict>
</comment>
<proteinExistence type="evidence at transcript level"/>
<keyword id="KW-0158">Chromosome</keyword>
<keyword id="KW-1185">Reference proteome</keyword>
<gene>
    <name type="primary">qser1</name>
</gene>
<feature type="chain" id="PRO_0000288934" description="Glutamine and serine-rich protein 1">
    <location>
        <begin position="1"/>
        <end position="1673"/>
    </location>
</feature>
<feature type="region of interest" description="Disordered" evidence="2">
    <location>
        <begin position="265"/>
        <end position="322"/>
    </location>
</feature>
<feature type="region of interest" description="Disordered" evidence="2">
    <location>
        <begin position="411"/>
        <end position="543"/>
    </location>
</feature>
<feature type="region of interest" description="Disordered" evidence="2">
    <location>
        <begin position="872"/>
        <end position="892"/>
    </location>
</feature>
<feature type="region of interest" description="Disordered" evidence="2">
    <location>
        <begin position="923"/>
        <end position="961"/>
    </location>
</feature>
<feature type="region of interest" description="Disordered" evidence="2">
    <location>
        <begin position="1050"/>
        <end position="1081"/>
    </location>
</feature>
<feature type="region of interest" description="Disordered" evidence="2">
    <location>
        <begin position="1149"/>
        <end position="1182"/>
    </location>
</feature>
<feature type="region of interest" description="Disordered" evidence="2">
    <location>
        <begin position="1216"/>
        <end position="1272"/>
    </location>
</feature>
<feature type="region of interest" description="Disordered" evidence="2">
    <location>
        <begin position="1390"/>
        <end position="1476"/>
    </location>
</feature>
<feature type="compositionally biased region" description="Polar residues" evidence="2">
    <location>
        <begin position="289"/>
        <end position="309"/>
    </location>
</feature>
<feature type="compositionally biased region" description="Low complexity" evidence="2">
    <location>
        <begin position="310"/>
        <end position="322"/>
    </location>
</feature>
<feature type="compositionally biased region" description="Low complexity" evidence="2">
    <location>
        <begin position="411"/>
        <end position="458"/>
    </location>
</feature>
<feature type="compositionally biased region" description="Polar residues" evidence="2">
    <location>
        <begin position="459"/>
        <end position="539"/>
    </location>
</feature>
<feature type="compositionally biased region" description="Polar residues" evidence="2">
    <location>
        <begin position="947"/>
        <end position="956"/>
    </location>
</feature>
<feature type="compositionally biased region" description="Basic and acidic residues" evidence="2">
    <location>
        <begin position="1222"/>
        <end position="1233"/>
    </location>
</feature>
<feature type="compositionally biased region" description="Polar residues" evidence="2">
    <location>
        <begin position="1259"/>
        <end position="1272"/>
    </location>
</feature>
<feature type="compositionally biased region" description="Polar residues" evidence="2">
    <location>
        <begin position="1397"/>
        <end position="1411"/>
    </location>
</feature>
<feature type="compositionally biased region" description="Basic and acidic residues" evidence="2">
    <location>
        <begin position="1435"/>
        <end position="1451"/>
    </location>
</feature>
<feature type="compositionally biased region" description="Low complexity" evidence="2">
    <location>
        <begin position="1452"/>
        <end position="1462"/>
    </location>
</feature>
<sequence>MNFLSAIESRTAQAASSGTTLLPQFRAPSWQTGMHSSTATELFVTGALQTSGTFPTSALTAYQHPNTFSSRNFATTPSLALQDGTFSAATNGLLSPHDPLLQIKTSQTPTALTFERIGSAVLSTSIPQSSTYRSAQESAPHLLQPQFSLLPSALGGTQQPAQPYSTSVFTGSTASIERALQRECSVIKHHQRPSSTQSVQAQLSGTQHSLPNYLTSVSGVSLHDASRQSSLLCAPLGALTHVSNGGPVQKTSQVSVELSQSYPSVIPSPGYPPSSTKSKNCPTKAPPRSSKTPKSQSVVSPELTQSYTKSSQNQSSVNSSQAQAFSTAQLPSLLSVSQPPIYVSTQSPNLPSASQSQVFSTIKTEKLPPLYKPLTVFSSQSQTITSGSQTLSYSSDQSLSLSSVSSETYSDQTRDLSSANQSQSYSSNNSQGLTSVSQSQVSYSSQSQVMSPVSPSDSYTSGQNQTLASPSLPFSTSSRGQNLSSSSPTQNFISMHPTPNTQDSTSPQSQKFLPSVQPSSFASSPHSQTMQNSRTTADSKSYVKRKSDTNLYASAKQEEKFQMQDLQALQQTALETATPGLSEGELNTQETAYSVSKADDRYSHSVIKSNSRMEEQVLGLQGTKKDERLISPVGHMPQHVGHLNNSASHDGKKNTDLIQSTQVSAKDLSQHTMLHKVLDTKMQEQPSTSPQLQAAMRHSQHLQLPGAQVLLDSGCDLQMFQQSMLQSNMGQTKPSAQMQRIQSPPQVAHPFLQMDGQIIQSNGAQSQQSLHAQGSDVIKMDTSNGKHLQQHLHTKDHFSHRGRLDSKNQFDSLNPMCFSESMLLTDERNFLSHVDDILAATAAQEFAKSSNEENLSVKNQDAKSRFQSLNVRHMSPNFTPPKPQNMNNLSINGSQSAVNLSTVSTTQPKNVSLDQTHIQPMEQDLPSGMVSPVPGANQDDHEKNSENIKNPPNVNQEPKEGGNIQEEVGDAEFLSNNKTLSEENTTTEGDFIMGGDENAALGQVQSHLSKIDPQAGGSSTIEMEEDCPDISQDGQQKGKDKMAIKQFTEDENANLKQIKRNMPLKRSVSKGPDVPGAQYSSHVSEGYYDSYQHQERMRQKIKEVEEKQPEVKTGFIASFLDFLKTGPKQQFSAPAVRVPSRVRRPCTPVIRPPCPGPLSPQSVAGAPVSDSGSASPPKKAEEDLKKNLETLPSFSSDEDDATVGNNDLQKSISTALSALDENSEKRLKTEGDKAALSAKQDPSTPRNGQDKTKAPESLKPSQPEATQPEQLAKSQETIAIEGFTDEENTESGGEGIYRERDEFVVKIEDIELLKEALCTGKEPPAIWKVQKALLQKFIPEIKDGQRSFAATNSYLGYFGDAKTKYKRVYVKFVENANKKEYVRVCSRKPKSKVLQPARTTHTKASGGSKVSETPPPKTAPPKVVSAKPKAKPQKTKAEPPPKKRKQWKEEFSSSQSDSSPDMQSDEEEFAPPPPPIVTRFLNTRAMKETFKGYVELLVGLTLDGDMMQNLEKENDDVLLPHMRKIEGMLNENRRRLLTKLQLEQPLKNALENYPDFAIISRETKSKSAACKIKVNGKWYNKKTLRPAKNPSKQSQEFPVEPEKSQLCSLYHALHHYKYHIYLKCKEEVSSVQKANRDLKQEELVNHCLKNIKWVEDLFEKFGELLSRVQQTCS</sequence>
<dbReference type="EMBL" id="BC081280">
    <property type="protein sequence ID" value="AAH81280.1"/>
    <property type="status" value="ALT_INIT"/>
    <property type="molecule type" value="mRNA"/>
</dbReference>
<dbReference type="SMR" id="Q66IN2"/>
<dbReference type="IntAct" id="Q66IN2">
    <property type="interactions" value="1"/>
</dbReference>
<dbReference type="AGR" id="Xenbase:XB-GENE-6254849"/>
<dbReference type="Xenbase" id="XB-GENE-6254849">
    <property type="gene designation" value="qser1.S"/>
</dbReference>
<dbReference type="OrthoDB" id="21499at2759"/>
<dbReference type="Proteomes" id="UP000186698">
    <property type="component" value="Unplaced"/>
</dbReference>
<dbReference type="GO" id="GO:0005694">
    <property type="term" value="C:chromosome"/>
    <property type="evidence" value="ECO:0007669"/>
    <property type="project" value="UniProtKB-SubCell"/>
</dbReference>
<dbReference type="InterPro" id="IPR052466">
    <property type="entry name" value="DNA_MethProtect_Complex"/>
</dbReference>
<dbReference type="InterPro" id="IPR025451">
    <property type="entry name" value="DUF4211"/>
</dbReference>
<dbReference type="PANTHER" id="PTHR14709:SF2">
    <property type="entry name" value="GLUTAMINE AND SERINE-RICH PROTEIN 1"/>
    <property type="match status" value="1"/>
</dbReference>
<dbReference type="PANTHER" id="PTHR14709">
    <property type="entry name" value="GLUTAMINE AND SERINE-RICH PROTEIN 1-RELATED"/>
    <property type="match status" value="1"/>
</dbReference>
<dbReference type="Pfam" id="PF13926">
    <property type="entry name" value="DUF4211"/>
    <property type="match status" value="1"/>
</dbReference>